<sequence>MDLFEYQAKELFAKHNVPTTPGRVTDTAEGARAIATEIGHPVMVKAQVKIGGRGKAGGVKYAATPDDAYEHANNILGLDIKGHVVKKLLVAEASDIAEEYYISFLLDRANRTYLAMCSVEGGMEIEEVAATKPDRLAKVPVDAAKGVDLAFARSIAEQGHLPAEVLDAAAVTISKLWDLFVGEDATLVEVNPLVRTPDDQILALDGKVTLDANADFRHPDHVEFEDRAATDPLELKAKEHDLNYVKLDGQVGIIGNGAGLVMSTLDVVAYAGEKHGGVKPANFLDIGGGASAEVMAAGLDVVLGDSQVKSVFVNVFGGITSCDAVATGIVKALEILGAEANKPLVVRLDGNNVEEGRRILTDANHPLVTLVPTMDEAADKAAELASA</sequence>
<gene>
    <name evidence="1" type="primary">sucC</name>
    <name type="ordered locus">MMAR_4550</name>
</gene>
<reference key="1">
    <citation type="journal article" date="2008" name="Genome Res.">
        <title>Insights from the complete genome sequence of Mycobacterium marinum on the evolution of Mycobacterium tuberculosis.</title>
        <authorList>
            <person name="Stinear T.P."/>
            <person name="Seemann T."/>
            <person name="Harrison P.F."/>
            <person name="Jenkin G.A."/>
            <person name="Davies J.K."/>
            <person name="Johnson P.D."/>
            <person name="Abdellah Z."/>
            <person name="Arrowsmith C."/>
            <person name="Chillingworth T."/>
            <person name="Churcher C."/>
            <person name="Clarke K."/>
            <person name="Cronin A."/>
            <person name="Davis P."/>
            <person name="Goodhead I."/>
            <person name="Holroyd N."/>
            <person name="Jagels K."/>
            <person name="Lord A."/>
            <person name="Moule S."/>
            <person name="Mungall K."/>
            <person name="Norbertczak H."/>
            <person name="Quail M.A."/>
            <person name="Rabbinowitsch E."/>
            <person name="Walker D."/>
            <person name="White B."/>
            <person name="Whitehead S."/>
            <person name="Small P.L."/>
            <person name="Brosch R."/>
            <person name="Ramakrishnan L."/>
            <person name="Fischbach M.A."/>
            <person name="Parkhill J."/>
            <person name="Cole S.T."/>
        </authorList>
    </citation>
    <scope>NUCLEOTIDE SEQUENCE [LARGE SCALE GENOMIC DNA]</scope>
    <source>
        <strain>ATCC BAA-535 / M</strain>
    </source>
</reference>
<accession>B2HED1</accession>
<protein>
    <recommendedName>
        <fullName evidence="1">Succinate--CoA ligase [ADP-forming] subunit beta</fullName>
        <ecNumber evidence="1">6.2.1.5</ecNumber>
    </recommendedName>
    <alternativeName>
        <fullName evidence="1">Succinyl-CoA synthetase subunit beta</fullName>
        <shortName evidence="1">SCS-beta</shortName>
    </alternativeName>
</protein>
<dbReference type="EC" id="6.2.1.5" evidence="1"/>
<dbReference type="EMBL" id="CP000854">
    <property type="protein sequence ID" value="ACC42956.1"/>
    <property type="molecule type" value="Genomic_DNA"/>
</dbReference>
<dbReference type="RefSeq" id="WP_012396100.1">
    <property type="nucleotide sequence ID" value="NC_010612.1"/>
</dbReference>
<dbReference type="SMR" id="B2HED1"/>
<dbReference type="STRING" id="216594.MMAR_4550"/>
<dbReference type="GeneID" id="34340783"/>
<dbReference type="KEGG" id="mmi:MMAR_4550"/>
<dbReference type="eggNOG" id="COG0045">
    <property type="taxonomic scope" value="Bacteria"/>
</dbReference>
<dbReference type="HOGENOM" id="CLU_037430_4_0_11"/>
<dbReference type="OrthoDB" id="9802602at2"/>
<dbReference type="UniPathway" id="UPA00223">
    <property type="reaction ID" value="UER00999"/>
</dbReference>
<dbReference type="Proteomes" id="UP000001190">
    <property type="component" value="Chromosome"/>
</dbReference>
<dbReference type="GO" id="GO:0005829">
    <property type="term" value="C:cytosol"/>
    <property type="evidence" value="ECO:0007669"/>
    <property type="project" value="TreeGrafter"/>
</dbReference>
<dbReference type="GO" id="GO:0042709">
    <property type="term" value="C:succinate-CoA ligase complex"/>
    <property type="evidence" value="ECO:0007669"/>
    <property type="project" value="TreeGrafter"/>
</dbReference>
<dbReference type="GO" id="GO:0005524">
    <property type="term" value="F:ATP binding"/>
    <property type="evidence" value="ECO:0007669"/>
    <property type="project" value="UniProtKB-UniRule"/>
</dbReference>
<dbReference type="GO" id="GO:0000287">
    <property type="term" value="F:magnesium ion binding"/>
    <property type="evidence" value="ECO:0007669"/>
    <property type="project" value="UniProtKB-UniRule"/>
</dbReference>
<dbReference type="GO" id="GO:0004775">
    <property type="term" value="F:succinate-CoA ligase (ADP-forming) activity"/>
    <property type="evidence" value="ECO:0007669"/>
    <property type="project" value="UniProtKB-UniRule"/>
</dbReference>
<dbReference type="GO" id="GO:0004776">
    <property type="term" value="F:succinate-CoA ligase (GDP-forming) activity"/>
    <property type="evidence" value="ECO:0007669"/>
    <property type="project" value="RHEA"/>
</dbReference>
<dbReference type="GO" id="GO:0006104">
    <property type="term" value="P:succinyl-CoA metabolic process"/>
    <property type="evidence" value="ECO:0007669"/>
    <property type="project" value="TreeGrafter"/>
</dbReference>
<dbReference type="GO" id="GO:0006099">
    <property type="term" value="P:tricarboxylic acid cycle"/>
    <property type="evidence" value="ECO:0007669"/>
    <property type="project" value="UniProtKB-UniRule"/>
</dbReference>
<dbReference type="FunFam" id="3.30.1490.20:FF:000014">
    <property type="entry name" value="Succinate--CoA ligase [ADP-forming] subunit beta"/>
    <property type="match status" value="1"/>
</dbReference>
<dbReference type="FunFam" id="3.30.470.20:FF:000002">
    <property type="entry name" value="Succinate--CoA ligase [ADP-forming] subunit beta"/>
    <property type="match status" value="1"/>
</dbReference>
<dbReference type="FunFam" id="3.40.50.261:FF:000007">
    <property type="entry name" value="Succinate--CoA ligase [ADP-forming] subunit beta"/>
    <property type="match status" value="1"/>
</dbReference>
<dbReference type="Gene3D" id="3.30.1490.20">
    <property type="entry name" value="ATP-grasp fold, A domain"/>
    <property type="match status" value="1"/>
</dbReference>
<dbReference type="Gene3D" id="3.30.470.20">
    <property type="entry name" value="ATP-grasp fold, B domain"/>
    <property type="match status" value="1"/>
</dbReference>
<dbReference type="Gene3D" id="3.40.50.261">
    <property type="entry name" value="Succinyl-CoA synthetase domains"/>
    <property type="match status" value="1"/>
</dbReference>
<dbReference type="HAMAP" id="MF_00558">
    <property type="entry name" value="Succ_CoA_beta"/>
    <property type="match status" value="1"/>
</dbReference>
<dbReference type="InterPro" id="IPR011761">
    <property type="entry name" value="ATP-grasp"/>
</dbReference>
<dbReference type="InterPro" id="IPR013650">
    <property type="entry name" value="ATP-grasp_succ-CoA_synth-type"/>
</dbReference>
<dbReference type="InterPro" id="IPR013815">
    <property type="entry name" value="ATP_grasp_subdomain_1"/>
</dbReference>
<dbReference type="InterPro" id="IPR017866">
    <property type="entry name" value="Succ-CoA_synthase_bsu_CS"/>
</dbReference>
<dbReference type="InterPro" id="IPR005811">
    <property type="entry name" value="SUCC_ACL_C"/>
</dbReference>
<dbReference type="InterPro" id="IPR005809">
    <property type="entry name" value="Succ_CoA_ligase-like_bsu"/>
</dbReference>
<dbReference type="InterPro" id="IPR016102">
    <property type="entry name" value="Succinyl-CoA_synth-like"/>
</dbReference>
<dbReference type="NCBIfam" id="NF001913">
    <property type="entry name" value="PRK00696.1"/>
    <property type="match status" value="1"/>
</dbReference>
<dbReference type="NCBIfam" id="TIGR01016">
    <property type="entry name" value="sucCoAbeta"/>
    <property type="match status" value="1"/>
</dbReference>
<dbReference type="PANTHER" id="PTHR11815:SF10">
    <property type="entry name" value="SUCCINATE--COA LIGASE [GDP-FORMING] SUBUNIT BETA, MITOCHONDRIAL"/>
    <property type="match status" value="1"/>
</dbReference>
<dbReference type="PANTHER" id="PTHR11815">
    <property type="entry name" value="SUCCINYL-COA SYNTHETASE BETA CHAIN"/>
    <property type="match status" value="1"/>
</dbReference>
<dbReference type="Pfam" id="PF08442">
    <property type="entry name" value="ATP-grasp_2"/>
    <property type="match status" value="1"/>
</dbReference>
<dbReference type="Pfam" id="PF00549">
    <property type="entry name" value="Ligase_CoA"/>
    <property type="match status" value="1"/>
</dbReference>
<dbReference type="PIRSF" id="PIRSF001554">
    <property type="entry name" value="SucCS_beta"/>
    <property type="match status" value="1"/>
</dbReference>
<dbReference type="SUPFAM" id="SSF56059">
    <property type="entry name" value="Glutathione synthetase ATP-binding domain-like"/>
    <property type="match status" value="1"/>
</dbReference>
<dbReference type="SUPFAM" id="SSF52210">
    <property type="entry name" value="Succinyl-CoA synthetase domains"/>
    <property type="match status" value="1"/>
</dbReference>
<dbReference type="PROSITE" id="PS50975">
    <property type="entry name" value="ATP_GRASP"/>
    <property type="match status" value="1"/>
</dbReference>
<dbReference type="PROSITE" id="PS01217">
    <property type="entry name" value="SUCCINYL_COA_LIG_3"/>
    <property type="match status" value="1"/>
</dbReference>
<evidence type="ECO:0000255" key="1">
    <source>
        <dbReference type="HAMAP-Rule" id="MF_00558"/>
    </source>
</evidence>
<organism>
    <name type="scientific">Mycobacterium marinum (strain ATCC BAA-535 / M)</name>
    <dbReference type="NCBI Taxonomy" id="216594"/>
    <lineage>
        <taxon>Bacteria</taxon>
        <taxon>Bacillati</taxon>
        <taxon>Actinomycetota</taxon>
        <taxon>Actinomycetes</taxon>
        <taxon>Mycobacteriales</taxon>
        <taxon>Mycobacteriaceae</taxon>
        <taxon>Mycobacterium</taxon>
        <taxon>Mycobacterium ulcerans group</taxon>
    </lineage>
</organism>
<proteinExistence type="inferred from homology"/>
<comment type="function">
    <text evidence="1">Succinyl-CoA synthetase functions in the citric acid cycle (TCA), coupling the hydrolysis of succinyl-CoA to the synthesis of either ATP or GTP and thus represents the only step of substrate-level phosphorylation in the TCA. The beta subunit provides nucleotide specificity of the enzyme and binds the substrate succinate, while the binding sites for coenzyme A and phosphate are found in the alpha subunit.</text>
</comment>
<comment type="catalytic activity">
    <reaction evidence="1">
        <text>succinate + ATP + CoA = succinyl-CoA + ADP + phosphate</text>
        <dbReference type="Rhea" id="RHEA:17661"/>
        <dbReference type="ChEBI" id="CHEBI:30031"/>
        <dbReference type="ChEBI" id="CHEBI:30616"/>
        <dbReference type="ChEBI" id="CHEBI:43474"/>
        <dbReference type="ChEBI" id="CHEBI:57287"/>
        <dbReference type="ChEBI" id="CHEBI:57292"/>
        <dbReference type="ChEBI" id="CHEBI:456216"/>
        <dbReference type="EC" id="6.2.1.5"/>
    </reaction>
    <physiologicalReaction direction="right-to-left" evidence="1">
        <dbReference type="Rhea" id="RHEA:17663"/>
    </physiologicalReaction>
</comment>
<comment type="catalytic activity">
    <reaction evidence="1">
        <text>GTP + succinate + CoA = succinyl-CoA + GDP + phosphate</text>
        <dbReference type="Rhea" id="RHEA:22120"/>
        <dbReference type="ChEBI" id="CHEBI:30031"/>
        <dbReference type="ChEBI" id="CHEBI:37565"/>
        <dbReference type="ChEBI" id="CHEBI:43474"/>
        <dbReference type="ChEBI" id="CHEBI:57287"/>
        <dbReference type="ChEBI" id="CHEBI:57292"/>
        <dbReference type="ChEBI" id="CHEBI:58189"/>
    </reaction>
    <physiologicalReaction direction="right-to-left" evidence="1">
        <dbReference type="Rhea" id="RHEA:22122"/>
    </physiologicalReaction>
</comment>
<comment type="cofactor">
    <cofactor evidence="1">
        <name>Mg(2+)</name>
        <dbReference type="ChEBI" id="CHEBI:18420"/>
    </cofactor>
    <text evidence="1">Binds 1 Mg(2+) ion per subunit.</text>
</comment>
<comment type="pathway">
    <text evidence="1">Carbohydrate metabolism; tricarboxylic acid cycle; succinate from succinyl-CoA (ligase route): step 1/1.</text>
</comment>
<comment type="subunit">
    <text evidence="1">Heterotetramer of two alpha and two beta subunits.</text>
</comment>
<comment type="similarity">
    <text evidence="1">Belongs to the succinate/malate CoA ligase beta subunit family.</text>
</comment>
<keyword id="KW-0067">ATP-binding</keyword>
<keyword id="KW-0436">Ligase</keyword>
<keyword id="KW-0460">Magnesium</keyword>
<keyword id="KW-0479">Metal-binding</keyword>
<keyword id="KW-0547">Nucleotide-binding</keyword>
<keyword id="KW-1185">Reference proteome</keyword>
<keyword id="KW-0816">Tricarboxylic acid cycle</keyword>
<feature type="chain" id="PRO_1000129201" description="Succinate--CoA ligase [ADP-forming] subunit beta">
    <location>
        <begin position="1"/>
        <end position="387"/>
    </location>
</feature>
<feature type="domain" description="ATP-grasp" evidence="1">
    <location>
        <begin position="9"/>
        <end position="236"/>
    </location>
</feature>
<feature type="binding site" evidence="1">
    <location>
        <position position="45"/>
    </location>
    <ligand>
        <name>ATP</name>
        <dbReference type="ChEBI" id="CHEBI:30616"/>
    </ligand>
</feature>
<feature type="binding site" evidence="1">
    <location>
        <begin position="52"/>
        <end position="54"/>
    </location>
    <ligand>
        <name>ATP</name>
        <dbReference type="ChEBI" id="CHEBI:30616"/>
    </ligand>
</feature>
<feature type="binding site" evidence="1">
    <location>
        <position position="94"/>
    </location>
    <ligand>
        <name>ATP</name>
        <dbReference type="ChEBI" id="CHEBI:30616"/>
    </ligand>
</feature>
<feature type="binding site" evidence="1">
    <location>
        <position position="99"/>
    </location>
    <ligand>
        <name>ATP</name>
        <dbReference type="ChEBI" id="CHEBI:30616"/>
    </ligand>
</feature>
<feature type="binding site" evidence="1">
    <location>
        <position position="191"/>
    </location>
    <ligand>
        <name>Mg(2+)</name>
        <dbReference type="ChEBI" id="CHEBI:18420"/>
    </ligand>
</feature>
<feature type="binding site" evidence="1">
    <location>
        <position position="205"/>
    </location>
    <ligand>
        <name>Mg(2+)</name>
        <dbReference type="ChEBI" id="CHEBI:18420"/>
    </ligand>
</feature>
<feature type="binding site" evidence="1">
    <location>
        <position position="256"/>
    </location>
    <ligand>
        <name>substrate</name>
        <note>ligand shared with subunit alpha</note>
    </ligand>
</feature>
<feature type="binding site" evidence="1">
    <location>
        <begin position="318"/>
        <end position="320"/>
    </location>
    <ligand>
        <name>substrate</name>
        <note>ligand shared with subunit alpha</note>
    </ligand>
</feature>
<name>SUCC_MYCMM</name>